<dbReference type="EMBL" id="X16978">
    <property type="protein sequence ID" value="CAA34849.1"/>
    <property type="status" value="ALT_INIT"/>
    <property type="molecule type" value="mRNA"/>
</dbReference>
<dbReference type="EMBL" id="BC108146">
    <property type="protein sequence ID" value="AAI08147.1"/>
    <property type="molecule type" value="mRNA"/>
</dbReference>
<dbReference type="PIR" id="S08239">
    <property type="entry name" value="PWBOE"/>
</dbReference>
<dbReference type="RefSeq" id="NP_001137213.1">
    <property type="nucleotide sequence ID" value="NM_001143741.1"/>
</dbReference>
<dbReference type="RefSeq" id="XP_002697025.2">
    <property type="nucleotide sequence ID" value="XM_002696979.4"/>
</dbReference>
<dbReference type="RefSeq" id="XP_005193391.1">
    <property type="nucleotide sequence ID" value="XM_005193334.3"/>
</dbReference>
<dbReference type="PDB" id="1E79">
    <property type="method" value="X-ray"/>
    <property type="resolution" value="2.40 A"/>
    <property type="chains" value="I=2-51"/>
</dbReference>
<dbReference type="PDB" id="1H8E">
    <property type="method" value="X-ray"/>
    <property type="resolution" value="2.00 A"/>
    <property type="chains" value="I=2-51"/>
</dbReference>
<dbReference type="PDB" id="2CK3">
    <property type="method" value="X-ray"/>
    <property type="resolution" value="1.95 A"/>
    <property type="chains" value="I=2-51"/>
</dbReference>
<dbReference type="PDB" id="2JDI">
    <property type="method" value="X-ray"/>
    <property type="resolution" value="1.90 A"/>
    <property type="chains" value="I=2-51"/>
</dbReference>
<dbReference type="PDB" id="2V7Q">
    <property type="method" value="X-ray"/>
    <property type="resolution" value="2.10 A"/>
    <property type="chains" value="I=2-51"/>
</dbReference>
<dbReference type="PDB" id="2W6H">
    <property type="method" value="X-ray"/>
    <property type="resolution" value="5.00 A"/>
    <property type="chains" value="I=1-51"/>
</dbReference>
<dbReference type="PDB" id="2W6I">
    <property type="method" value="X-ray"/>
    <property type="resolution" value="4.00 A"/>
    <property type="chains" value="I=1-51"/>
</dbReference>
<dbReference type="PDB" id="2W6J">
    <property type="method" value="X-ray"/>
    <property type="resolution" value="3.84 A"/>
    <property type="chains" value="I=1-51"/>
</dbReference>
<dbReference type="PDB" id="2WSS">
    <property type="method" value="X-ray"/>
    <property type="resolution" value="3.20 A"/>
    <property type="chains" value="I/R=2-51"/>
</dbReference>
<dbReference type="PDB" id="2XND">
    <property type="method" value="X-ray"/>
    <property type="resolution" value="3.50 A"/>
    <property type="chains" value="I=2-48"/>
</dbReference>
<dbReference type="PDB" id="4ASU">
    <property type="method" value="X-ray"/>
    <property type="resolution" value="2.60 A"/>
    <property type="chains" value="I=2-51"/>
</dbReference>
<dbReference type="PDB" id="4YXW">
    <property type="method" value="X-ray"/>
    <property type="resolution" value="3.10 A"/>
    <property type="chains" value="I=2-51"/>
</dbReference>
<dbReference type="PDB" id="5ARA">
    <property type="method" value="EM"/>
    <property type="resolution" value="6.70 A"/>
    <property type="chains" value="I=2-51"/>
</dbReference>
<dbReference type="PDB" id="5ARE">
    <property type="method" value="EM"/>
    <property type="resolution" value="7.40 A"/>
    <property type="chains" value="I=2-51"/>
</dbReference>
<dbReference type="PDB" id="5ARH">
    <property type="method" value="EM"/>
    <property type="resolution" value="7.20 A"/>
    <property type="chains" value="I=2-51"/>
</dbReference>
<dbReference type="PDB" id="5ARI">
    <property type="method" value="EM"/>
    <property type="resolution" value="7.40 A"/>
    <property type="chains" value="I=2-51"/>
</dbReference>
<dbReference type="PDB" id="5FIJ">
    <property type="method" value="EM"/>
    <property type="resolution" value="7.40 A"/>
    <property type="chains" value="I=2-51"/>
</dbReference>
<dbReference type="PDB" id="5FIK">
    <property type="method" value="EM"/>
    <property type="resolution" value="6.40 A"/>
    <property type="chains" value="I=2-51"/>
</dbReference>
<dbReference type="PDB" id="5FIL">
    <property type="method" value="EM"/>
    <property type="resolution" value="7.10 A"/>
    <property type="chains" value="I=2-51"/>
</dbReference>
<dbReference type="PDB" id="6YY0">
    <property type="method" value="EM"/>
    <property type="resolution" value="3.23 A"/>
    <property type="chains" value="I=2-51"/>
</dbReference>
<dbReference type="PDB" id="6Z1R">
    <property type="method" value="EM"/>
    <property type="resolution" value="3.29 A"/>
    <property type="chains" value="I=2-51"/>
</dbReference>
<dbReference type="PDB" id="6Z1U">
    <property type="method" value="EM"/>
    <property type="resolution" value="3.47 A"/>
    <property type="chains" value="I=2-51"/>
</dbReference>
<dbReference type="PDB" id="6ZG7">
    <property type="method" value="EM"/>
    <property type="resolution" value="3.49 A"/>
    <property type="chains" value="I=2-51"/>
</dbReference>
<dbReference type="PDB" id="6ZG8">
    <property type="method" value="EM"/>
    <property type="resolution" value="3.49 A"/>
    <property type="chains" value="I=2-51"/>
</dbReference>
<dbReference type="PDB" id="6ZIK">
    <property type="method" value="EM"/>
    <property type="resolution" value="3.66 A"/>
    <property type="chains" value="I=2-51"/>
</dbReference>
<dbReference type="PDB" id="6ZPO">
    <property type="method" value="EM"/>
    <property type="resolution" value="4.00 A"/>
    <property type="chains" value="I=2-51"/>
</dbReference>
<dbReference type="PDB" id="6ZQM">
    <property type="method" value="EM"/>
    <property type="resolution" value="3.29 A"/>
    <property type="chains" value="I=2-51"/>
</dbReference>
<dbReference type="PDB" id="6ZQN">
    <property type="method" value="EM"/>
    <property type="resolution" value="4.00 A"/>
    <property type="chains" value="I=2-51"/>
</dbReference>
<dbReference type="PDB" id="7AJB">
    <property type="method" value="EM"/>
    <property type="resolution" value="9.20 A"/>
    <property type="chains" value="AI/I=2-51"/>
</dbReference>
<dbReference type="PDB" id="7AJC">
    <property type="method" value="EM"/>
    <property type="resolution" value="11.90 A"/>
    <property type="chains" value="AI/I=2-51"/>
</dbReference>
<dbReference type="PDB" id="7AJD">
    <property type="method" value="EM"/>
    <property type="resolution" value="9.00 A"/>
    <property type="chains" value="AI/I=2-51"/>
</dbReference>
<dbReference type="PDB" id="7AJE">
    <property type="method" value="EM"/>
    <property type="resolution" value="9.40 A"/>
    <property type="chains" value="AI/I=2-51"/>
</dbReference>
<dbReference type="PDB" id="7AJF">
    <property type="method" value="EM"/>
    <property type="resolution" value="8.45 A"/>
    <property type="chains" value="AI/I=2-51"/>
</dbReference>
<dbReference type="PDB" id="7AJG">
    <property type="method" value="EM"/>
    <property type="resolution" value="10.70 A"/>
    <property type="chains" value="AI/I=2-51"/>
</dbReference>
<dbReference type="PDB" id="7AJH">
    <property type="method" value="EM"/>
    <property type="resolution" value="9.70 A"/>
    <property type="chains" value="AI/I=2-51"/>
</dbReference>
<dbReference type="PDB" id="7AJI">
    <property type="method" value="EM"/>
    <property type="resolution" value="11.40 A"/>
    <property type="chains" value="AI/I=2-51"/>
</dbReference>
<dbReference type="PDB" id="7AJJ">
    <property type="method" value="EM"/>
    <property type="resolution" value="13.10 A"/>
    <property type="chains" value="AI/I=2-51"/>
</dbReference>
<dbReference type="PDBsum" id="1E79"/>
<dbReference type="PDBsum" id="1H8E"/>
<dbReference type="PDBsum" id="2CK3"/>
<dbReference type="PDBsum" id="2JDI"/>
<dbReference type="PDBsum" id="2V7Q"/>
<dbReference type="PDBsum" id="2W6H"/>
<dbReference type="PDBsum" id="2W6I"/>
<dbReference type="PDBsum" id="2W6J"/>
<dbReference type="PDBsum" id="2WSS"/>
<dbReference type="PDBsum" id="2XND"/>
<dbReference type="PDBsum" id="4ASU"/>
<dbReference type="PDBsum" id="4YXW"/>
<dbReference type="PDBsum" id="5ARA"/>
<dbReference type="PDBsum" id="5ARE"/>
<dbReference type="PDBsum" id="5ARH"/>
<dbReference type="PDBsum" id="5ARI"/>
<dbReference type="PDBsum" id="5FIJ"/>
<dbReference type="PDBsum" id="5FIK"/>
<dbReference type="PDBsum" id="5FIL"/>
<dbReference type="PDBsum" id="6YY0"/>
<dbReference type="PDBsum" id="6Z1R"/>
<dbReference type="PDBsum" id="6Z1U"/>
<dbReference type="PDBsum" id="6ZG7"/>
<dbReference type="PDBsum" id="6ZG8"/>
<dbReference type="PDBsum" id="6ZIK"/>
<dbReference type="PDBsum" id="6ZPO"/>
<dbReference type="PDBsum" id="6ZQM"/>
<dbReference type="PDBsum" id="6ZQN"/>
<dbReference type="PDBsum" id="7AJB"/>
<dbReference type="PDBsum" id="7AJC"/>
<dbReference type="PDBsum" id="7AJD"/>
<dbReference type="PDBsum" id="7AJE"/>
<dbReference type="PDBsum" id="7AJF"/>
<dbReference type="PDBsum" id="7AJG"/>
<dbReference type="PDBsum" id="7AJH"/>
<dbReference type="PDBsum" id="7AJI"/>
<dbReference type="PDBsum" id="7AJJ"/>
<dbReference type="EMDB" id="EMD-11001"/>
<dbReference type="EMDB" id="EMD-11195"/>
<dbReference type="EMDB" id="EMD-11196"/>
<dbReference type="EMDB" id="EMD-11227"/>
<dbReference type="SMR" id="P05632"/>
<dbReference type="CORUM" id="P05632"/>
<dbReference type="DIP" id="DIP-46312N"/>
<dbReference type="FunCoup" id="P05632">
    <property type="interactions" value="1019"/>
</dbReference>
<dbReference type="IntAct" id="P05632">
    <property type="interactions" value="7"/>
</dbReference>
<dbReference type="MINT" id="P05632"/>
<dbReference type="STRING" id="9913.ENSBTAP00000051455"/>
<dbReference type="BindingDB" id="P05632"/>
<dbReference type="ChEMBL" id="CHEMBL612444"/>
<dbReference type="PaxDb" id="9913-ENSBTAP00000035213"/>
<dbReference type="Ensembl" id="ENSBTAT00000056576.2">
    <property type="protein sequence ID" value="ENSBTAP00000051455.1"/>
    <property type="gene ID" value="ENSBTAG00000039208.3"/>
</dbReference>
<dbReference type="GeneID" id="617230"/>
<dbReference type="KEGG" id="bta:617230"/>
<dbReference type="CTD" id="514"/>
<dbReference type="VEuPathDB" id="HostDB:ENSBTAG00000039208"/>
<dbReference type="VEuPathDB" id="HostDB:ENSBTAG00000051801"/>
<dbReference type="VGNC" id="VGNC:103015">
    <property type="gene designation" value="ATP5F1E"/>
</dbReference>
<dbReference type="eggNOG" id="KOG3495">
    <property type="taxonomic scope" value="Eukaryota"/>
</dbReference>
<dbReference type="GeneTree" id="ENSGT00390000015470"/>
<dbReference type="HOGENOM" id="CLU_187039_4_0_1"/>
<dbReference type="InParanoid" id="P05632"/>
<dbReference type="OMA" id="QICAQVV"/>
<dbReference type="OrthoDB" id="269124at2759"/>
<dbReference type="TreeFam" id="TF300278"/>
<dbReference type="Reactome" id="R-BTA-163210">
    <property type="pathway name" value="Formation of ATP by chemiosmotic coupling"/>
</dbReference>
<dbReference type="Reactome" id="R-BTA-8949613">
    <property type="pathway name" value="Cristae formation"/>
</dbReference>
<dbReference type="EvolutionaryTrace" id="P05632"/>
<dbReference type="PRO" id="PR:P05632"/>
<dbReference type="Proteomes" id="UP000009136">
    <property type="component" value="Chromosome 13"/>
</dbReference>
<dbReference type="Bgee" id="ENSBTAG00000051801">
    <property type="expression patterns" value="Expressed in semen and 37 other cell types or tissues"/>
</dbReference>
<dbReference type="GO" id="GO:0005743">
    <property type="term" value="C:mitochondrial inner membrane"/>
    <property type="evidence" value="ECO:0000318"/>
    <property type="project" value="GO_Central"/>
</dbReference>
<dbReference type="GO" id="GO:0005739">
    <property type="term" value="C:mitochondrion"/>
    <property type="evidence" value="ECO:0000305"/>
    <property type="project" value="UniProtKB"/>
</dbReference>
<dbReference type="GO" id="GO:0045259">
    <property type="term" value="C:proton-transporting ATP synthase complex"/>
    <property type="evidence" value="ECO:0000314"/>
    <property type="project" value="UniProtKB"/>
</dbReference>
<dbReference type="GO" id="GO:0046933">
    <property type="term" value="F:proton-transporting ATP synthase activity, rotational mechanism"/>
    <property type="evidence" value="ECO:0007669"/>
    <property type="project" value="InterPro"/>
</dbReference>
<dbReference type="GO" id="GO:0042776">
    <property type="term" value="P:proton motive force-driven mitochondrial ATP synthesis"/>
    <property type="evidence" value="ECO:0000318"/>
    <property type="project" value="GO_Central"/>
</dbReference>
<dbReference type="CDD" id="cd12153">
    <property type="entry name" value="F1-ATPase_epsilon"/>
    <property type="match status" value="1"/>
</dbReference>
<dbReference type="FunFam" id="1.10.1620.20:FF:000001">
    <property type="entry name" value="ATP synthase subunit epsilon, mitochondrial"/>
    <property type="match status" value="1"/>
</dbReference>
<dbReference type="Gene3D" id="1.10.1620.20">
    <property type="entry name" value="ATP synthase, F1 complex, epsilon subunit superfamily, mitochondrial"/>
    <property type="match status" value="1"/>
</dbReference>
<dbReference type="InterPro" id="IPR006721">
    <property type="entry name" value="ATP_synth_F1_esu_mt"/>
</dbReference>
<dbReference type="InterPro" id="IPR036742">
    <property type="entry name" value="ATP_synth_F1_esu_sf_mt"/>
</dbReference>
<dbReference type="PANTHER" id="PTHR12448">
    <property type="entry name" value="ATP SYNTHASE EPSILON CHAIN, MITOCHONDRIAL"/>
    <property type="match status" value="1"/>
</dbReference>
<dbReference type="PANTHER" id="PTHR12448:SF0">
    <property type="entry name" value="ATP SYNTHASE SUBUNIT EPSILON, MITOCHONDRIAL"/>
    <property type="match status" value="1"/>
</dbReference>
<dbReference type="Pfam" id="PF04627">
    <property type="entry name" value="ATP-synt_Eps"/>
    <property type="match status" value="1"/>
</dbReference>
<dbReference type="SUPFAM" id="SSF48690">
    <property type="entry name" value="Epsilon subunit of mitochondrial F1F0-ATP synthase"/>
    <property type="match status" value="1"/>
</dbReference>
<keyword id="KW-0002">3D-structure</keyword>
<keyword id="KW-0007">Acetylation</keyword>
<keyword id="KW-0066">ATP synthesis</keyword>
<keyword id="KW-0139">CF(1)</keyword>
<keyword id="KW-0903">Direct protein sequencing</keyword>
<keyword id="KW-0375">Hydrogen ion transport</keyword>
<keyword id="KW-0406">Ion transport</keyword>
<keyword id="KW-0472">Membrane</keyword>
<keyword id="KW-0496">Mitochondrion</keyword>
<keyword id="KW-0999">Mitochondrion inner membrane</keyword>
<keyword id="KW-1185">Reference proteome</keyword>
<keyword id="KW-0813">Transport</keyword>
<comment type="function">
    <text evidence="1 2">Subunit epsilon, of the mitochondrial membrane ATP synthase complex (F(1)F(0) ATP synthase or Complex V) that produces ATP from ADP in the presence of a proton gradient across the membrane which is generated by electron transport complexes of the respiratory chain. ATP synthase complex consist of a soluble F(1) head domain - the catalytic core - and a membrane F(1) domain - the membrane proton channel. These two domains are linked by a central stalk rotating inside the F(1) region and a stationary peripheral stalk. During catalysis, ATP synthesis in the catalytic domain of F(1) is coupled via a rotary mechanism of the central stalk subunits to proton translocation (By similarity). In vivo, can only synthesize ATP although its ATP hydrolase activity can be activated artificially in vitro (By similarity). May be essential for the assembly of F(1) and may play an important role in the incorporation of the hydrophobic subunit c into the F(1)-c oligomer rotor of the mitochondrial ATP synthase complex (By similarity).</text>
</comment>
<comment type="subunit">
    <text evidence="2 4 5 7">Component of the ATP synthase complex composed at least of ATP5F1A/subunit alpha, ATP5F1B/subunit beta, ATP5MC1/subunit c (homooctomer), MT-ATP6/subunit a, MT-ATP8/subunit 8, ATP5ME/subunit e, ATP5MF/subunit f, ATP5MG/subunit g, ATP5MK/subunit k, ATP5MJ/subunit j, ATP5F1C/subunit gamma, ATP5F1D/subunit delta, ATP5F1E/subunit epsilon, ATP5PF/subunit F6, ATP5PB/subunit b, ATP5PD/subunit d, ATP5PO/subunit OSCP (PubMed:17570365, PubMed:17895376, PubMed:25851905). ATP synthase complex consists of a soluble F(1) head domain (subunits alpha(3) and beta(3)) - the catalytic core - and a membrane F(0) domain - the membrane proton channel (subunits c, a, 8, e, f, g, k and j). These two domains are linked by a central stalk (subunits gamma, delta, and epsilon) rotating inside the F1 region and a stationary peripheral stalk (subunits F6, b, d, and OSCP) (By similarity).</text>
</comment>
<comment type="subcellular location">
    <subcellularLocation>
        <location>Mitochondrion</location>
    </subcellularLocation>
    <subcellularLocation>
        <location>Mitochondrion inner membrane</location>
    </subcellularLocation>
</comment>
<comment type="similarity">
    <text evidence="9">Belongs to the eukaryotic ATPase epsilon family.</text>
</comment>
<comment type="sequence caution" evidence="9">
    <conflict type="erroneous initiation">
        <sequence resource="EMBL-CDS" id="CAA34849"/>
    </conflict>
    <text>Extended N-terminus.</text>
</comment>
<gene>
    <name evidence="2" type="primary">ATP5F1E</name>
    <name type="synonym">ATP5E</name>
</gene>
<accession>P05632</accession>
<accession>Q32PE5</accession>
<proteinExistence type="evidence at protein level"/>
<feature type="initiator methionine" description="Removed" evidence="6 8">
    <location>
        <position position="1"/>
    </location>
</feature>
<feature type="chain" id="PRO_0000071661" description="ATP synthase F(1) complex subunit epsilon, mitochondrial">
    <location>
        <begin position="2"/>
        <end position="51"/>
    </location>
</feature>
<feature type="modified residue" description="N6-acetyllysine; alternate" evidence="2">
    <location>
        <position position="21"/>
    </location>
</feature>
<feature type="modified residue" description="N6-succinyllysine; alternate" evidence="3">
    <location>
        <position position="21"/>
    </location>
</feature>
<feature type="modified residue" description="N6-acetyllysine; alternate" evidence="3">
    <location>
        <position position="32"/>
    </location>
</feature>
<feature type="modified residue" description="N6-succinyllysine; alternate" evidence="3">
    <location>
        <position position="32"/>
    </location>
</feature>
<feature type="modified residue" description="N6-acetyllysine; alternate" evidence="3">
    <location>
        <position position="37"/>
    </location>
</feature>
<feature type="modified residue" description="N6-succinyllysine; alternate" evidence="3">
    <location>
        <position position="37"/>
    </location>
</feature>
<feature type="modified residue" description="N6-acetyllysine" evidence="3">
    <location>
        <position position="44"/>
    </location>
</feature>
<feature type="helix" evidence="10">
    <location>
        <begin position="4"/>
        <end position="7"/>
    </location>
</feature>
<feature type="helix" evidence="10">
    <location>
        <begin position="12"/>
        <end position="24"/>
    </location>
</feature>
<feature type="helix" evidence="10">
    <location>
        <begin position="29"/>
        <end position="36"/>
    </location>
</feature>
<feature type="strand" evidence="10">
    <location>
        <begin position="44"/>
        <end position="46"/>
    </location>
</feature>
<sequence length="51" mass="5783">MVAYWRQAGLSYIRYSQICAKAVRDALKTEFKANAMKTSGSTIKIVKVKKE</sequence>
<reference key="1">
    <citation type="journal article" date="1990" name="Biochem. J.">
        <title>The epsilon-subunit of ATP synthase from bovine heart mitochondria. Complementary DNA sequence, expression in bovine tissues and evidence of homologous sequences in man and rat.</title>
        <authorList>
            <person name="Vinas O."/>
            <person name="Powell S.J."/>
            <person name="Runswick M.J."/>
            <person name="Iacobazzi V."/>
            <person name="Walker J.E."/>
        </authorList>
    </citation>
    <scope>NUCLEOTIDE SEQUENCE [MRNA]</scope>
    <source>
        <tissue>Heart</tissue>
    </source>
</reference>
<reference key="2">
    <citation type="submission" date="2005-10" db="EMBL/GenBank/DDBJ databases">
        <authorList>
            <consortium name="NIH - Mammalian Gene Collection (MGC) project"/>
        </authorList>
    </citation>
    <scope>NUCLEOTIDE SEQUENCE [LARGE SCALE MRNA]</scope>
    <source>
        <strain>Crossbred X Angus</strain>
        <tissue>Liver</tissue>
    </source>
</reference>
<reference key="3">
    <citation type="journal article" date="1985" name="J. Mol. Biol.">
        <title>Primary structure and subunit stoichiometry of F1-ATPase from bovine mitochondria.</title>
        <authorList>
            <person name="Walker J.E."/>
            <person name="Fearnley I.M."/>
            <person name="Gay N.J."/>
            <person name="Gibson B.W."/>
            <person name="Northrop F.D."/>
            <person name="Powell S.J."/>
            <person name="Runswick M.J."/>
            <person name="Saraste M."/>
            <person name="Tybulewicz V.L.J."/>
        </authorList>
    </citation>
    <scope>PROTEIN SEQUENCE OF 2-51</scope>
</reference>
<reference key="4">
    <citation type="journal article" date="1991" name="Biochemistry">
        <title>Identification of the subunits of F1F0-ATPase from bovine heart mitochondria.</title>
        <authorList>
            <person name="Walker J.E."/>
            <person name="Lutter R."/>
            <person name="Dupuis A."/>
            <person name="Runswick M.J."/>
        </authorList>
    </citation>
    <scope>PROTEIN SEQUENCE OF 2-7</scope>
    <source>
        <tissue>Heart</tissue>
    </source>
</reference>
<reference key="5">
    <citation type="journal article" date="2007" name="FEBS Lett.">
        <title>Association of two proteolipids of unknown function with ATP synthase from bovine heart mitochondria.</title>
        <authorList>
            <person name="Chen R."/>
            <person name="Runswick M.J."/>
            <person name="Carroll J."/>
            <person name="Fearnley I.M."/>
            <person name="Walker J.E."/>
        </authorList>
    </citation>
    <scope>IDENTIFICATION IN THE ATP SYNTHASE COMPLEX</scope>
</reference>
<reference key="6">
    <citation type="journal article" date="2015" name="J. Biol. Chem.">
        <title>Organization of Subunits in the Membrane Domain of the Bovine F-ATPase Revealed by Covalent Cross-linking.</title>
        <authorList>
            <person name="Lee J."/>
            <person name="Ding S."/>
            <person name="Walpole T.B."/>
            <person name="Holding A.N."/>
            <person name="Montgomery M.G."/>
            <person name="Fearnley I.M."/>
            <person name="Walker J.E."/>
        </authorList>
    </citation>
    <scope>IDENTIFICATION BY MASS SPECTROMETRY</scope>
    <scope>IDENTIFICATION IN THE ATP SYNTHASE COMPLEX</scope>
</reference>
<reference key="7">
    <citation type="journal article" date="1994" name="Nature">
        <title>Structure at 2.8-A resolution of F1-ATPase from bovine heart mitochondria.</title>
        <authorList>
            <person name="Abrahams J.P."/>
            <person name="Leslie A.G.W."/>
            <person name="Lutter R."/>
            <person name="Walker J.E."/>
        </authorList>
    </citation>
    <scope>X-RAY CRYSTALLOGRAPHY (2.8 ANGSTROMS)</scope>
</reference>
<reference key="8">
    <citation type="journal article" date="2007" name="Proc. Natl. Acad. Sci. U.S.A.">
        <title>How the regulatory protein, IF(1), inhibits F(1)-ATPase from bovine mitochondria.</title>
        <authorList>
            <person name="Gledhill J.R."/>
            <person name="Montgomery M.G."/>
            <person name="Leslie A.G."/>
            <person name="Walker J.E."/>
        </authorList>
    </citation>
    <scope>X-RAY CRYSTALLOGRAPHY (2.1 ANGSTROMS) OF 2-50 IN COMPLEX WITH ATPIF1; ATP5F1A; ATP5F1B; ATP5F1C AND ATP5F1D</scope>
</reference>
<evidence type="ECO:0000250" key="1">
    <source>
        <dbReference type="UniProtKB" id="P19483"/>
    </source>
</evidence>
<evidence type="ECO:0000250" key="2">
    <source>
        <dbReference type="UniProtKB" id="P56381"/>
    </source>
</evidence>
<evidence type="ECO:0000250" key="3">
    <source>
        <dbReference type="UniProtKB" id="P56382"/>
    </source>
</evidence>
<evidence type="ECO:0000269" key="4">
    <source>
    </source>
</evidence>
<evidence type="ECO:0000269" key="5">
    <source>
    </source>
</evidence>
<evidence type="ECO:0000269" key="6">
    <source>
    </source>
</evidence>
<evidence type="ECO:0000269" key="7">
    <source>
    </source>
</evidence>
<evidence type="ECO:0000269" key="8">
    <source>
    </source>
</evidence>
<evidence type="ECO:0000305" key="9"/>
<evidence type="ECO:0007829" key="10">
    <source>
        <dbReference type="PDB" id="6YY0"/>
    </source>
</evidence>
<protein>
    <recommendedName>
        <fullName evidence="2">ATP synthase F(1) complex subunit epsilon, mitochondrial</fullName>
        <shortName>ATPase subunit epsilon</shortName>
    </recommendedName>
    <alternativeName>
        <fullName evidence="2">ATP synthase F1 subunit epsilon</fullName>
    </alternativeName>
</protein>
<organism>
    <name type="scientific">Bos taurus</name>
    <name type="common">Bovine</name>
    <dbReference type="NCBI Taxonomy" id="9913"/>
    <lineage>
        <taxon>Eukaryota</taxon>
        <taxon>Metazoa</taxon>
        <taxon>Chordata</taxon>
        <taxon>Craniata</taxon>
        <taxon>Vertebrata</taxon>
        <taxon>Euteleostomi</taxon>
        <taxon>Mammalia</taxon>
        <taxon>Eutheria</taxon>
        <taxon>Laurasiatheria</taxon>
        <taxon>Artiodactyla</taxon>
        <taxon>Ruminantia</taxon>
        <taxon>Pecora</taxon>
        <taxon>Bovidae</taxon>
        <taxon>Bovinae</taxon>
        <taxon>Bos</taxon>
    </lineage>
</organism>
<name>ATP5E_BOVIN</name>